<sequence length="319" mass="34022">MISRHLQNNLMSVDPVSSQAMELSDVTLIEGVGNEVMVVAGVVVLTLALVLAWLSTYVADSSNSQLLGTIVSAGDTSVLHLGHVDQLVNQGTPEPTEHPHPSGGSDDKAEETSDSGGDTTGEPGARGDMEPSLEHLLDIQGLPKRQAGLESSRPEASLGLDDSTCLSPSPSLINVRLKFLNDTEELAVARPEDTVGTLKSKYFPGQESQMKLIYQGRLLQDPARTLSSLNITNNCVIHCHRSPPGAAVSGPSTSLTPTTEQSSLGVNVGSLMVPVFVVLLGVVWYFRINYRQFFTAPATVSLVGVTVFFSFLVFGMYGR</sequence>
<proteinExistence type="evidence at transcript level"/>
<keyword id="KW-0472">Membrane</keyword>
<keyword id="KW-1185">Reference proteome</keyword>
<keyword id="KW-0812">Transmembrane</keyword>
<keyword id="KW-1133">Transmembrane helix</keyword>
<gene>
    <name type="primary">Tmub2</name>
</gene>
<evidence type="ECO:0000255" key="1"/>
<evidence type="ECO:0000255" key="2">
    <source>
        <dbReference type="PROSITE-ProRule" id="PRU00214"/>
    </source>
</evidence>
<evidence type="ECO:0000256" key="3">
    <source>
        <dbReference type="SAM" id="MobiDB-lite"/>
    </source>
</evidence>
<evidence type="ECO:0000305" key="4"/>
<feature type="chain" id="PRO_0000245314" description="Transmembrane and ubiquitin-like domain-containing protein 2">
    <location>
        <begin position="1"/>
        <end position="319"/>
    </location>
</feature>
<feature type="transmembrane region" description="Helical" evidence="1">
    <location>
        <begin position="36"/>
        <end position="56"/>
    </location>
</feature>
<feature type="transmembrane region" description="Helical" evidence="1">
    <location>
        <begin position="264"/>
        <end position="284"/>
    </location>
</feature>
<feature type="transmembrane region" description="Helical" evidence="1">
    <location>
        <begin position="293"/>
        <end position="313"/>
    </location>
</feature>
<feature type="domain" description="Ubiquitin-like" evidence="2">
    <location>
        <begin position="173"/>
        <end position="246"/>
    </location>
</feature>
<feature type="region of interest" description="Disordered" evidence="3">
    <location>
        <begin position="88"/>
        <end position="130"/>
    </location>
</feature>
<feature type="region of interest" description="Disordered" evidence="3">
    <location>
        <begin position="146"/>
        <end position="165"/>
    </location>
</feature>
<feature type="compositionally biased region" description="Basic and acidic residues" evidence="3">
    <location>
        <begin position="95"/>
        <end position="111"/>
    </location>
</feature>
<protein>
    <recommendedName>
        <fullName>Transmembrane and ubiquitin-like domain-containing protein 2</fullName>
    </recommendedName>
</protein>
<accession>Q4FZV7</accession>
<accession>Q0P5P8</accession>
<organism>
    <name type="scientific">Rattus norvegicus</name>
    <name type="common">Rat</name>
    <dbReference type="NCBI Taxonomy" id="10116"/>
    <lineage>
        <taxon>Eukaryota</taxon>
        <taxon>Metazoa</taxon>
        <taxon>Chordata</taxon>
        <taxon>Craniata</taxon>
        <taxon>Vertebrata</taxon>
        <taxon>Euteleostomi</taxon>
        <taxon>Mammalia</taxon>
        <taxon>Eutheria</taxon>
        <taxon>Euarchontoglires</taxon>
        <taxon>Glires</taxon>
        <taxon>Rodentia</taxon>
        <taxon>Myomorpha</taxon>
        <taxon>Muroidea</taxon>
        <taxon>Muridae</taxon>
        <taxon>Murinae</taxon>
        <taxon>Rattus</taxon>
    </lineage>
</organism>
<reference key="1">
    <citation type="journal article" date="2004" name="Genome Res.">
        <title>The status, quality, and expansion of the NIH full-length cDNA project: the Mammalian Gene Collection (MGC).</title>
        <authorList>
            <consortium name="The MGC Project Team"/>
        </authorList>
    </citation>
    <scope>NUCLEOTIDE SEQUENCE [LARGE SCALE MRNA]</scope>
    <source>
        <tissue>Kidney</tissue>
    </source>
</reference>
<dbReference type="EMBL" id="BC085794">
    <property type="protein sequence ID" value="AAH85794.1"/>
    <property type="molecule type" value="mRNA"/>
</dbReference>
<dbReference type="EMBL" id="BC099074">
    <property type="protein sequence ID" value="AAH99074.1"/>
    <property type="molecule type" value="mRNA"/>
</dbReference>
<dbReference type="RefSeq" id="NP_001026821.1">
    <property type="nucleotide sequence ID" value="NM_001031651.2"/>
</dbReference>
<dbReference type="RefSeq" id="XP_006247394.1">
    <property type="nucleotide sequence ID" value="XM_006247332.2"/>
</dbReference>
<dbReference type="SMR" id="Q4FZV7"/>
<dbReference type="FunCoup" id="Q4FZV7">
    <property type="interactions" value="3013"/>
</dbReference>
<dbReference type="STRING" id="10116.ENSRNOP00000052057"/>
<dbReference type="PhosphoSitePlus" id="Q4FZV7"/>
<dbReference type="PaxDb" id="10116-ENSRNOP00000052057"/>
<dbReference type="Ensembl" id="ENSRNOT00000082722.2">
    <property type="protein sequence ID" value="ENSRNOP00000073316.1"/>
    <property type="gene ID" value="ENSRNOG00000020916.8"/>
</dbReference>
<dbReference type="GeneID" id="303567"/>
<dbReference type="KEGG" id="rno:303567"/>
<dbReference type="UCSC" id="RGD:1304758">
    <property type="organism name" value="rat"/>
</dbReference>
<dbReference type="AGR" id="RGD:1304758"/>
<dbReference type="CTD" id="79089"/>
<dbReference type="RGD" id="1304758">
    <property type="gene designation" value="Tmub2"/>
</dbReference>
<dbReference type="eggNOG" id="ENOG502QU8U">
    <property type="taxonomic scope" value="Eukaryota"/>
</dbReference>
<dbReference type="GeneTree" id="ENSGT00390000014069"/>
<dbReference type="InParanoid" id="Q4FZV7"/>
<dbReference type="PhylomeDB" id="Q4FZV7"/>
<dbReference type="PRO" id="PR:Q4FZV7"/>
<dbReference type="Proteomes" id="UP000002494">
    <property type="component" value="Chromosome 10"/>
</dbReference>
<dbReference type="Bgee" id="ENSRNOG00000020916">
    <property type="expression patterns" value="Expressed in Ammon's horn and 19 other cell types or tissues"/>
</dbReference>
<dbReference type="GO" id="GO:0016020">
    <property type="term" value="C:membrane"/>
    <property type="evidence" value="ECO:0007669"/>
    <property type="project" value="UniProtKB-SubCell"/>
</dbReference>
<dbReference type="GO" id="GO:0036503">
    <property type="term" value="P:ERAD pathway"/>
    <property type="evidence" value="ECO:0000318"/>
    <property type="project" value="GO_Central"/>
</dbReference>
<dbReference type="CDD" id="cd17132">
    <property type="entry name" value="Ubl_TMUB2"/>
    <property type="match status" value="1"/>
</dbReference>
<dbReference type="Gene3D" id="3.10.20.90">
    <property type="entry name" value="Phosphatidylinositol 3-kinase Catalytic Subunit, Chain A, domain 1"/>
    <property type="match status" value="1"/>
</dbReference>
<dbReference type="InterPro" id="IPR040352">
    <property type="entry name" value="TMUB1/2"/>
</dbReference>
<dbReference type="InterPro" id="IPR000626">
    <property type="entry name" value="Ubiquitin-like_dom"/>
</dbReference>
<dbReference type="InterPro" id="IPR029071">
    <property type="entry name" value="Ubiquitin-like_domsf"/>
</dbReference>
<dbReference type="PANTHER" id="PTHR14557">
    <property type="entry name" value="PROTEIN C7ORF21"/>
    <property type="match status" value="1"/>
</dbReference>
<dbReference type="PANTHER" id="PTHR14557:SF4">
    <property type="entry name" value="TRANSMEMBRANE AND UBIQUITIN-LIKE DOMAIN-CONTAINING PROTEIN 2"/>
    <property type="match status" value="1"/>
</dbReference>
<dbReference type="Pfam" id="PF00240">
    <property type="entry name" value="ubiquitin"/>
    <property type="match status" value="1"/>
</dbReference>
<dbReference type="SMART" id="SM00213">
    <property type="entry name" value="UBQ"/>
    <property type="match status" value="1"/>
</dbReference>
<dbReference type="SUPFAM" id="SSF54236">
    <property type="entry name" value="Ubiquitin-like"/>
    <property type="match status" value="1"/>
</dbReference>
<dbReference type="PROSITE" id="PS50053">
    <property type="entry name" value="UBIQUITIN_2"/>
    <property type="match status" value="1"/>
</dbReference>
<name>TMUB2_RAT</name>
<comment type="subcellular location">
    <subcellularLocation>
        <location evidence="4">Membrane</location>
        <topology evidence="4">Multi-pass membrane protein</topology>
    </subcellularLocation>
</comment>